<comment type="function">
    <text evidence="1">The glycine cleavage system catalyzes the degradation of glycine.</text>
</comment>
<comment type="catalytic activity">
    <reaction evidence="1">
        <text>N(6)-[(R)-S(8)-aminomethyldihydrolipoyl]-L-lysyl-[protein] + (6S)-5,6,7,8-tetrahydrofolate = N(6)-[(R)-dihydrolipoyl]-L-lysyl-[protein] + (6R)-5,10-methylene-5,6,7,8-tetrahydrofolate + NH4(+)</text>
        <dbReference type="Rhea" id="RHEA:16945"/>
        <dbReference type="Rhea" id="RHEA-COMP:10475"/>
        <dbReference type="Rhea" id="RHEA-COMP:10492"/>
        <dbReference type="ChEBI" id="CHEBI:15636"/>
        <dbReference type="ChEBI" id="CHEBI:28938"/>
        <dbReference type="ChEBI" id="CHEBI:57453"/>
        <dbReference type="ChEBI" id="CHEBI:83100"/>
        <dbReference type="ChEBI" id="CHEBI:83143"/>
        <dbReference type="EC" id="2.1.2.10"/>
    </reaction>
</comment>
<comment type="subunit">
    <text evidence="1">The glycine cleavage system is composed of four proteins: P, T, L and H.</text>
</comment>
<comment type="similarity">
    <text evidence="1">Belongs to the GcvT family.</text>
</comment>
<organism>
    <name type="scientific">Natranaerobius thermophilus (strain ATCC BAA-1301 / DSM 18059 / JW/NM-WN-LF)</name>
    <dbReference type="NCBI Taxonomy" id="457570"/>
    <lineage>
        <taxon>Bacteria</taxon>
        <taxon>Bacillati</taxon>
        <taxon>Bacillota</taxon>
        <taxon>Clostridia</taxon>
        <taxon>Natranaerobiales</taxon>
        <taxon>Natranaerobiaceae</taxon>
        <taxon>Natranaerobius</taxon>
    </lineage>
</organism>
<sequence length="365" mass="41269">MTHPQKTPLYDIHKERGGKIIDFGGWYLPVQFTGIIDEVMTTRKEAGLFDVSHMGEIIVEGPKALEYLQKMVPNDVARLKPGKILYTPMCYENGGTVDDFLIYKMDENKFLLIVNAANTDKDFEWLQENNTEGVELKNLSDEYGQIAIQGPKAEKILQRLTDTPLKEIKFFNFKEDVDLDGVKALISRTGYTGENGFEIYIKAEETAKLWEKIEDAGENDGLKPIGLGARDVLRFEVCLPLYGNELSPEITPLEARLNPFVKLNKTEDFLGKDVLVNQKEQGLERVLVGFEMIDRGIPRTNYILMKDGQEIGFVSSGSQSPTLDKALGLGFIKPEHDQEGNEIEVKIRKKTAKAKIVKTPFYRRG</sequence>
<name>GCST_NATTJ</name>
<evidence type="ECO:0000255" key="1">
    <source>
        <dbReference type="HAMAP-Rule" id="MF_00259"/>
    </source>
</evidence>
<gene>
    <name evidence="1" type="primary">gcvT</name>
    <name type="ordered locus">Nther_2751</name>
</gene>
<keyword id="KW-0032">Aminotransferase</keyword>
<keyword id="KW-1185">Reference proteome</keyword>
<keyword id="KW-0808">Transferase</keyword>
<protein>
    <recommendedName>
        <fullName evidence="1">Aminomethyltransferase</fullName>
        <ecNumber evidence="1">2.1.2.10</ecNumber>
    </recommendedName>
    <alternativeName>
        <fullName evidence="1">Glycine cleavage system T protein</fullName>
    </alternativeName>
</protein>
<dbReference type="EC" id="2.1.2.10" evidence="1"/>
<dbReference type="EMBL" id="CP001034">
    <property type="protein sequence ID" value="ACB86302.1"/>
    <property type="molecule type" value="Genomic_DNA"/>
</dbReference>
<dbReference type="RefSeq" id="WP_012449136.1">
    <property type="nucleotide sequence ID" value="NC_010718.1"/>
</dbReference>
<dbReference type="SMR" id="B2A2T4"/>
<dbReference type="FunCoup" id="B2A2T4">
    <property type="interactions" value="372"/>
</dbReference>
<dbReference type="STRING" id="457570.Nther_2751"/>
<dbReference type="KEGG" id="nth:Nther_2751"/>
<dbReference type="eggNOG" id="COG0404">
    <property type="taxonomic scope" value="Bacteria"/>
</dbReference>
<dbReference type="HOGENOM" id="CLU_007884_10_2_9"/>
<dbReference type="InParanoid" id="B2A2T4"/>
<dbReference type="OrthoDB" id="9774591at2"/>
<dbReference type="Proteomes" id="UP000001683">
    <property type="component" value="Chromosome"/>
</dbReference>
<dbReference type="GO" id="GO:0005829">
    <property type="term" value="C:cytosol"/>
    <property type="evidence" value="ECO:0007669"/>
    <property type="project" value="TreeGrafter"/>
</dbReference>
<dbReference type="GO" id="GO:0005960">
    <property type="term" value="C:glycine cleavage complex"/>
    <property type="evidence" value="ECO:0007669"/>
    <property type="project" value="InterPro"/>
</dbReference>
<dbReference type="GO" id="GO:0004047">
    <property type="term" value="F:aminomethyltransferase activity"/>
    <property type="evidence" value="ECO:0007669"/>
    <property type="project" value="UniProtKB-UniRule"/>
</dbReference>
<dbReference type="GO" id="GO:0008483">
    <property type="term" value="F:transaminase activity"/>
    <property type="evidence" value="ECO:0007669"/>
    <property type="project" value="UniProtKB-KW"/>
</dbReference>
<dbReference type="GO" id="GO:0019464">
    <property type="term" value="P:glycine decarboxylation via glycine cleavage system"/>
    <property type="evidence" value="ECO:0007669"/>
    <property type="project" value="UniProtKB-UniRule"/>
</dbReference>
<dbReference type="FunFam" id="2.40.30.110:FF:000003">
    <property type="entry name" value="Aminomethyltransferase"/>
    <property type="match status" value="1"/>
</dbReference>
<dbReference type="FunFam" id="3.30.70.1400:FF:000001">
    <property type="entry name" value="Aminomethyltransferase"/>
    <property type="match status" value="1"/>
</dbReference>
<dbReference type="Gene3D" id="2.40.30.110">
    <property type="entry name" value="Aminomethyltransferase beta-barrel domains"/>
    <property type="match status" value="1"/>
</dbReference>
<dbReference type="Gene3D" id="3.30.70.1400">
    <property type="entry name" value="Aminomethyltransferase beta-barrel domains"/>
    <property type="match status" value="1"/>
</dbReference>
<dbReference type="Gene3D" id="4.10.1250.10">
    <property type="entry name" value="Aminomethyltransferase fragment"/>
    <property type="match status" value="1"/>
</dbReference>
<dbReference type="Gene3D" id="3.30.1360.120">
    <property type="entry name" value="Probable tRNA modification gtpase trme, domain 1"/>
    <property type="match status" value="1"/>
</dbReference>
<dbReference type="HAMAP" id="MF_00259">
    <property type="entry name" value="GcvT"/>
    <property type="match status" value="1"/>
</dbReference>
<dbReference type="InterPro" id="IPR006223">
    <property type="entry name" value="GCS_T"/>
</dbReference>
<dbReference type="InterPro" id="IPR022903">
    <property type="entry name" value="GCS_T_bac"/>
</dbReference>
<dbReference type="InterPro" id="IPR013977">
    <property type="entry name" value="GCST_C"/>
</dbReference>
<dbReference type="InterPro" id="IPR006222">
    <property type="entry name" value="GCV_T_N"/>
</dbReference>
<dbReference type="InterPro" id="IPR028896">
    <property type="entry name" value="GcvT/YgfZ/DmdA"/>
</dbReference>
<dbReference type="InterPro" id="IPR029043">
    <property type="entry name" value="GcvT/YgfZ_C"/>
</dbReference>
<dbReference type="InterPro" id="IPR027266">
    <property type="entry name" value="TrmE/GcvT_dom1"/>
</dbReference>
<dbReference type="NCBIfam" id="TIGR00528">
    <property type="entry name" value="gcvT"/>
    <property type="match status" value="1"/>
</dbReference>
<dbReference type="NCBIfam" id="NF001567">
    <property type="entry name" value="PRK00389.1"/>
    <property type="match status" value="1"/>
</dbReference>
<dbReference type="PANTHER" id="PTHR43757">
    <property type="entry name" value="AMINOMETHYLTRANSFERASE"/>
    <property type="match status" value="1"/>
</dbReference>
<dbReference type="PANTHER" id="PTHR43757:SF2">
    <property type="entry name" value="AMINOMETHYLTRANSFERASE, MITOCHONDRIAL"/>
    <property type="match status" value="1"/>
</dbReference>
<dbReference type="Pfam" id="PF01571">
    <property type="entry name" value="GCV_T"/>
    <property type="match status" value="1"/>
</dbReference>
<dbReference type="Pfam" id="PF08669">
    <property type="entry name" value="GCV_T_C"/>
    <property type="match status" value="1"/>
</dbReference>
<dbReference type="PIRSF" id="PIRSF006487">
    <property type="entry name" value="GcvT"/>
    <property type="match status" value="1"/>
</dbReference>
<dbReference type="SUPFAM" id="SSF101790">
    <property type="entry name" value="Aminomethyltransferase beta-barrel domain"/>
    <property type="match status" value="1"/>
</dbReference>
<dbReference type="SUPFAM" id="SSF103025">
    <property type="entry name" value="Folate-binding domain"/>
    <property type="match status" value="1"/>
</dbReference>
<proteinExistence type="inferred from homology"/>
<accession>B2A2T4</accession>
<feature type="chain" id="PRO_1000114100" description="Aminomethyltransferase">
    <location>
        <begin position="1"/>
        <end position="365"/>
    </location>
</feature>
<reference key="1">
    <citation type="submission" date="2008-04" db="EMBL/GenBank/DDBJ databases">
        <title>Complete sequence of chromosome of Natranaerobius thermophilus JW/NM-WN-LF.</title>
        <authorList>
            <consortium name="US DOE Joint Genome Institute"/>
            <person name="Copeland A."/>
            <person name="Lucas S."/>
            <person name="Lapidus A."/>
            <person name="Glavina del Rio T."/>
            <person name="Dalin E."/>
            <person name="Tice H."/>
            <person name="Bruce D."/>
            <person name="Goodwin L."/>
            <person name="Pitluck S."/>
            <person name="Chertkov O."/>
            <person name="Brettin T."/>
            <person name="Detter J.C."/>
            <person name="Han C."/>
            <person name="Kuske C.R."/>
            <person name="Schmutz J."/>
            <person name="Larimer F."/>
            <person name="Land M."/>
            <person name="Hauser L."/>
            <person name="Kyrpides N."/>
            <person name="Lykidis A."/>
            <person name="Mesbah N.M."/>
            <person name="Wiegel J."/>
        </authorList>
    </citation>
    <scope>NUCLEOTIDE SEQUENCE [LARGE SCALE GENOMIC DNA]</scope>
    <source>
        <strain>ATCC BAA-1301 / DSM 18059 / JW/NM-WN-LF</strain>
    </source>
</reference>